<comment type="function">
    <text evidence="1 2 3">Bifunctional enzyme that possesses cyclase and dehydrogenase activities (PubMed:30531909, PubMed:30664302). Functions as a non-oxidoreductive cyclase to promote the formation of cis-trans-nepetalactol (PubMed:30531909, PubMed:30664302). Functions as dehydrogenase to oxidize cis-cis-nepetalactol and cis-trans-nepetalactol into nepetalactones, metabolites that are both insect-repellent and have euphoric effect in cats (PubMed:30531909, PubMed:30664302). Binds NAD(+) as classical short-chain dehydrogenase/reductase (SDR), but does not utilize it for its redox-neutral cyclase activity (By similarity).</text>
</comment>
<comment type="catalytic activity">
    <reaction evidence="2 3">
        <text>(S)-8-oxocitronellyl enol = cis-trans-nepetalactol</text>
        <dbReference type="Rhea" id="RHEA:61416"/>
        <dbReference type="ChEBI" id="CHEBI:71494"/>
        <dbReference type="ChEBI" id="CHEBI:144481"/>
        <dbReference type="EC" id="5.5.1.34"/>
    </reaction>
    <physiologicalReaction direction="left-to-right" evidence="2 3">
        <dbReference type="Rhea" id="RHEA:61417"/>
    </physiologicalReaction>
</comment>
<comment type="catalytic activity">
    <reaction evidence="2 3">
        <text>cis-cis-nepetalactol + NAD(+) = cis-cis-nepetalactone + NADH + H(+)</text>
        <dbReference type="Rhea" id="RHEA:61424"/>
        <dbReference type="ChEBI" id="CHEBI:15378"/>
        <dbReference type="ChEBI" id="CHEBI:57540"/>
        <dbReference type="ChEBI" id="CHEBI:57945"/>
        <dbReference type="ChEBI" id="CHEBI:144482"/>
        <dbReference type="ChEBI" id="CHEBI:144485"/>
        <dbReference type="EC" id="1.1.1.419"/>
    </reaction>
    <physiologicalReaction direction="left-to-right" evidence="2 3">
        <dbReference type="Rhea" id="RHEA:61425"/>
    </physiologicalReaction>
</comment>
<comment type="catalytic activity">
    <reaction evidence="2 3">
        <text>cis-trans-nepetalactol + NAD(+) = cis-trans-nepetalactone + NADH + H(+)</text>
        <dbReference type="Rhea" id="RHEA:61428"/>
        <dbReference type="ChEBI" id="CHEBI:7518"/>
        <dbReference type="ChEBI" id="CHEBI:15378"/>
        <dbReference type="ChEBI" id="CHEBI:57540"/>
        <dbReference type="ChEBI" id="CHEBI:57945"/>
        <dbReference type="ChEBI" id="CHEBI:71494"/>
        <dbReference type="EC" id="1.1.1.419"/>
    </reaction>
    <physiologicalReaction direction="left-to-right" evidence="2 3">
        <dbReference type="Rhea" id="RHEA:61429"/>
    </physiologicalReaction>
</comment>
<comment type="biophysicochemical properties">
    <kinetics>
        <KM evidence="2">1.6 uM for cis-trans-nepetalactol (in the presence of NAD(+) at pH 8.0 and 25 degrees Celsius)</KM>
        <KM evidence="2">4.9 uM for cis-cis-nepetalactol (in the presence of NAD(+) at pH 8.0 and 25 degrees Celsius)</KM>
        <KM evidence="2">3.5 uM for NAD(+) (in the presence of cis-trans-nepetalactol at pH 8.0 and 25 degrees Celsius)</KM>
        <text>kcat is 0.148 sec(-1) with cis-trans-nepetalactol as substrate (in the presence of NAD(+) at pH 8.0 and 25 degrees Celsius). kcat is 0.32 sec(-1) with cis-cis-nepetalactol as substrate (in the presence of NAD(+) at pH 8.0 and 25 degrees Celsius). kcat is 0.173 sec(-1) with NAD(+) as substrate (in the presence of cis-trans-nepetalactol at pH 8.0 and 25 degrees Celsius).</text>
    </kinetics>
</comment>
<comment type="similarity">
    <text evidence="5">Belongs to the short-chain dehydrogenases/reductases (SDR) family.</text>
</comment>
<gene>
    <name evidence="4" type="primary">NEPS1</name>
</gene>
<reference key="1">
    <citation type="journal article" date="2019" name="Nat. Chem. Biol.">
        <title>Uncoupled activation and cyclization in catmint reductive terpenoid biosynthesis.</title>
        <authorList>
            <person name="Lichman B.R."/>
            <person name="Kamileen M.O."/>
            <person name="Titchiner G.R."/>
            <person name="Saalbach G."/>
            <person name="Stevenson C.E.M."/>
            <person name="Lawson D.M."/>
            <person name="O'Connor S.E."/>
        </authorList>
    </citation>
    <scope>NUCLEOTIDE SEQUENCE [MRNA]</scope>
    <scope>FUNCTION</scope>
    <scope>CATALYTIC ACTIVITY</scope>
    <scope>MUTAGENESIS OF ASN-125; THR-152; THR-153; THR-154; PRO-155; LEU-156; TYR-167; LYS-171; SER-198; VAL-199 AND THR-202</scope>
    <scope>BIOPHYSICOCHEMICAL PROPERTIES</scope>
</reference>
<reference key="2">
    <citation type="journal article" date="2019" name="Chemistry">
        <title>Biocatalytic strategies towards [4+2] cycloadditions.</title>
        <authorList>
            <person name="Lichman B.R."/>
            <person name="O'Connor S.E."/>
            <person name="Kries H."/>
        </authorList>
    </citation>
    <scope>FUNCTION</scope>
    <scope>CATALYTIC ACTIVITY</scope>
</reference>
<organism>
    <name type="scientific">Nepeta racemosa</name>
    <name type="common">Catmint</name>
    <name type="synonym">Raceme catnip</name>
    <dbReference type="NCBI Taxonomy" id="54731"/>
    <lineage>
        <taxon>Eukaryota</taxon>
        <taxon>Viridiplantae</taxon>
        <taxon>Streptophyta</taxon>
        <taxon>Embryophyta</taxon>
        <taxon>Tracheophyta</taxon>
        <taxon>Spermatophyta</taxon>
        <taxon>Magnoliopsida</taxon>
        <taxon>eudicotyledons</taxon>
        <taxon>Gunneridae</taxon>
        <taxon>Pentapetalae</taxon>
        <taxon>asterids</taxon>
        <taxon>lamiids</taxon>
        <taxon>Lamiales</taxon>
        <taxon>Lamiaceae</taxon>
        <taxon>Nepetoideae</taxon>
        <taxon>Mentheae</taxon>
        <taxon>Nepetinae</taxon>
        <taxon>Nepeta</taxon>
    </lineage>
</organism>
<evidence type="ECO:0000250" key="1">
    <source>
        <dbReference type="UniProtKB" id="A0A3Q8GLE8"/>
    </source>
</evidence>
<evidence type="ECO:0000269" key="2">
    <source>
    </source>
</evidence>
<evidence type="ECO:0000269" key="3">
    <source>
    </source>
</evidence>
<evidence type="ECO:0000303" key="4">
    <source>
    </source>
</evidence>
<evidence type="ECO:0000305" key="5"/>
<evidence type="ECO:0000305" key="6">
    <source>
    </source>
</evidence>
<protein>
    <recommendedName>
        <fullName evidence="5">(+)-cis,trans-nepetalactol synthase NEPS1</fullName>
        <ecNumber evidence="2 3">5.5.1.34</ecNumber>
    </recommendedName>
    <alternativeName>
        <fullName evidence="4">Nepetalactol-related short-chain dehydrogenase</fullName>
        <shortName evidence="4">Nepetalactol dehydrogenase</shortName>
        <ecNumber evidence="2 3">1.1.1.419</ecNumber>
    </alternativeName>
    <alternativeName>
        <fullName evidence="4">Nepetalactol-related short-chain reductase 1</fullName>
        <shortName evidence="4">Nepetalactol-related SDR1</shortName>
        <shortName evidence="4">NmNEPS1</shortName>
    </alternativeName>
</protein>
<feature type="chain" id="PRO_0000449299" description="(+)-cis,trans-nepetalactol synthase NEPS1">
    <location>
        <begin position="1"/>
        <end position="271"/>
    </location>
</feature>
<feature type="active site" description="Proton acceptor" evidence="6">
    <location>
        <position position="167"/>
    </location>
</feature>
<feature type="binding site" evidence="1">
    <location>
        <begin position="24"/>
        <end position="30"/>
    </location>
    <ligand>
        <name>NAD(+)</name>
        <dbReference type="ChEBI" id="CHEBI:57540"/>
    </ligand>
</feature>
<feature type="binding site" evidence="1">
    <location>
        <begin position="49"/>
        <end position="51"/>
    </location>
    <ligand>
        <name>NAD(+)</name>
        <dbReference type="ChEBI" id="CHEBI:57540"/>
    </ligand>
</feature>
<feature type="binding site" evidence="1">
    <location>
        <begin position="72"/>
        <end position="73"/>
    </location>
    <ligand>
        <name>NAD(+)</name>
        <dbReference type="ChEBI" id="CHEBI:57540"/>
    </ligand>
</feature>
<feature type="binding site" evidence="1">
    <location>
        <position position="99"/>
    </location>
    <ligand>
        <name>NAD(+)</name>
        <dbReference type="ChEBI" id="CHEBI:57540"/>
    </ligand>
</feature>
<feature type="binding site" evidence="6">
    <location>
        <position position="154"/>
    </location>
    <ligand>
        <name>substrate</name>
    </ligand>
</feature>
<feature type="binding site" evidence="6">
    <location>
        <position position="167"/>
    </location>
    <ligand>
        <name>NAD(+)</name>
        <dbReference type="ChEBI" id="CHEBI:57540"/>
    </ligand>
</feature>
<feature type="binding site" evidence="6">
    <location>
        <position position="167"/>
    </location>
    <ligand>
        <name>substrate</name>
    </ligand>
</feature>
<feature type="binding site" evidence="6">
    <location>
        <position position="171"/>
    </location>
    <ligand>
        <name>NAD(+)</name>
        <dbReference type="ChEBI" id="CHEBI:57540"/>
    </ligand>
</feature>
<feature type="binding site" evidence="6">
    <location>
        <begin position="200"/>
        <end position="205"/>
    </location>
    <ligand>
        <name>NAD(+)</name>
        <dbReference type="ChEBI" id="CHEBI:57540"/>
    </ligand>
</feature>
<feature type="mutagenesis site" description="Strongly reduced cis-trans-nepetalactone levels." evidence="2">
    <original>N</original>
    <variation>A</variation>
    <location>
        <position position="125"/>
    </location>
</feature>
<feature type="mutagenesis site" description="Absence of cis-trans-nepetalactone." evidence="2">
    <original>T</original>
    <variation>N</variation>
    <location>
        <position position="152"/>
    </location>
</feature>
<feature type="mutagenesis site" description="Almost normal cis-trans-nepetalactone levels." evidence="2">
    <original>T</original>
    <variation>A</variation>
    <location>
        <position position="153"/>
    </location>
</feature>
<feature type="mutagenesis site" description="Loss of dehydrogenase activity and strongly enhanced cis-trans-nepetalactol levels associated with a huge increase in Km for cis-trans-nepetalactol." evidence="2">
    <original>T</original>
    <variation>G</variation>
    <location>
        <position position="154"/>
    </location>
</feature>
<feature type="mutagenesis site" description="Strongly reduced cis-trans-nepetalactone levels." evidence="2">
    <original>P</original>
    <variation>S</variation>
    <location>
        <position position="155"/>
    </location>
</feature>
<feature type="mutagenesis site" description="Reduced dehydrogenase activity and absence of cis-trans-nepetalactone." evidence="2">
    <original>L</original>
    <variation>S</variation>
    <location>
        <position position="156"/>
    </location>
</feature>
<feature type="mutagenesis site" description="Absence of cis-trans-nepetalactone." evidence="2">
    <original>Y</original>
    <variation>F</variation>
    <location>
        <position position="167"/>
    </location>
</feature>
<feature type="mutagenesis site" description="Absence of cis-trans-nepetalactone." evidence="2">
    <original>K</original>
    <variation>M</variation>
    <location>
        <position position="171"/>
    </location>
</feature>
<feature type="mutagenesis site" description="Absence of cis-trans-nepetalactone." evidence="2">
    <original>S</original>
    <variation>M</variation>
    <location>
        <position position="198"/>
    </location>
</feature>
<feature type="mutagenesis site" description="Almost normal cis-trans-nepetalactone levels." evidence="2">
    <original>V</original>
    <variation>A</variation>
    <location>
        <position position="199"/>
    </location>
</feature>
<feature type="mutagenesis site" description="Absence of cis-trans-nepetalactone." evidence="2">
    <original>T</original>
    <variation>A</variation>
    <location>
        <position position="202"/>
    </location>
</feature>
<proteinExistence type="evidence at protein level"/>
<keyword id="KW-0413">Isomerase</keyword>
<keyword id="KW-0520">NAD</keyword>
<keyword id="KW-0560">Oxidoreductase</keyword>
<sequence>MASTANPMQVMKKKLEGKVVIVTGGASGIGQTAARVFAQHGARAVVIADIQSEVGKSVAKSIGDPCCYVQCDVSDEEEVKSMIEWTASAYGGLDMMFSNVGIMSKSAQTVMDLDLLEFDKVMRVNARGMAACLKHAARKMVELGTRGTIICTTTPLSSRGGQSMTDYAMSKHAVMGLVRSASIQLGAHGIRVNCVTPSVVLTPLAQRMGLATPDDFHTHFGNFTSLKGVYLTPEQVAEAVVYLASDDAAFITGHDLVLDGGLLCLPFFAPS</sequence>
<name>NEPS1_NEPRA</name>
<dbReference type="EC" id="5.5.1.34" evidence="2 3"/>
<dbReference type="EC" id="1.1.1.419" evidence="2 3"/>
<dbReference type="EMBL" id="MG677124">
    <property type="protein sequence ID" value="AXF35971.1"/>
    <property type="molecule type" value="mRNA"/>
</dbReference>
<dbReference type="SMR" id="A0A3Q8GL18"/>
<dbReference type="KEGG" id="ag:AXF35971"/>
<dbReference type="BRENDA" id="1.1.1.419">
    <property type="organism ID" value="12895"/>
</dbReference>
<dbReference type="BRENDA" id="5.5.1.34">
    <property type="organism ID" value="12895"/>
</dbReference>
<dbReference type="GO" id="GO:0016853">
    <property type="term" value="F:isomerase activity"/>
    <property type="evidence" value="ECO:0007669"/>
    <property type="project" value="UniProtKB-KW"/>
</dbReference>
<dbReference type="GO" id="GO:0016491">
    <property type="term" value="F:oxidoreductase activity"/>
    <property type="evidence" value="ECO:0007669"/>
    <property type="project" value="UniProtKB-KW"/>
</dbReference>
<dbReference type="FunFam" id="3.40.50.720:FF:000084">
    <property type="entry name" value="Short-chain dehydrogenase reductase"/>
    <property type="match status" value="1"/>
</dbReference>
<dbReference type="Gene3D" id="3.40.50.720">
    <property type="entry name" value="NAD(P)-binding Rossmann-like Domain"/>
    <property type="match status" value="1"/>
</dbReference>
<dbReference type="InterPro" id="IPR036291">
    <property type="entry name" value="NAD(P)-bd_dom_sf"/>
</dbReference>
<dbReference type="InterPro" id="IPR002347">
    <property type="entry name" value="SDR_fam"/>
</dbReference>
<dbReference type="PANTHER" id="PTHR42820">
    <property type="entry name" value="SHORT-CHAIN DEHYDROGENASE REDUCTASE"/>
    <property type="match status" value="1"/>
</dbReference>
<dbReference type="PANTHER" id="PTHR42820:SF21">
    <property type="entry name" value="SHORT-CHAIN DEHYDROGENASE REDUCTASE 3B-LIKE"/>
    <property type="match status" value="1"/>
</dbReference>
<dbReference type="Pfam" id="PF13561">
    <property type="entry name" value="adh_short_C2"/>
    <property type="match status" value="1"/>
</dbReference>
<dbReference type="PRINTS" id="PR00081">
    <property type="entry name" value="GDHRDH"/>
</dbReference>
<dbReference type="SUPFAM" id="SSF51735">
    <property type="entry name" value="NAD(P)-binding Rossmann-fold domains"/>
    <property type="match status" value="1"/>
</dbReference>
<accession>A0A3Q8GL18</accession>